<comment type="function">
    <text>In muscle, parvalbumin is thought to be involved in relaxation after contraction. It binds two calcium ions.</text>
</comment>
<comment type="mass spectrometry"/>
<comment type="miscellaneous">
    <text>This is the major hake parvalbumin.</text>
</comment>
<comment type="miscellaneous">
    <text>This parvalbumin has an isoelectric point of 4.36.</text>
</comment>
<comment type="miscellaneous">
    <text>Is regarded as an important allergen.</text>
</comment>
<comment type="similarity">
    <text evidence="5">Belongs to the parvalbumin family.</text>
</comment>
<dbReference type="PIR" id="A03055">
    <property type="entry name" value="PVHK"/>
</dbReference>
<dbReference type="SMR" id="P02620"/>
<dbReference type="Allergome" id="7643">
    <property type="allergen name" value="Mer mr 1"/>
</dbReference>
<dbReference type="iPTMnet" id="P02620"/>
<dbReference type="GO" id="GO:0005737">
    <property type="term" value="C:cytoplasm"/>
    <property type="evidence" value="ECO:0007669"/>
    <property type="project" value="TreeGrafter"/>
</dbReference>
<dbReference type="GO" id="GO:0005509">
    <property type="term" value="F:calcium ion binding"/>
    <property type="evidence" value="ECO:0007669"/>
    <property type="project" value="InterPro"/>
</dbReference>
<dbReference type="CDD" id="cd16255">
    <property type="entry name" value="EFh_parvalbumin_beta"/>
    <property type="match status" value="1"/>
</dbReference>
<dbReference type="FunFam" id="1.10.238.10:FF:000060">
    <property type="entry name" value="Parvalbumin, thymic"/>
    <property type="match status" value="1"/>
</dbReference>
<dbReference type="Gene3D" id="1.10.238.10">
    <property type="entry name" value="EF-hand"/>
    <property type="match status" value="1"/>
</dbReference>
<dbReference type="InterPro" id="IPR011992">
    <property type="entry name" value="EF-hand-dom_pair"/>
</dbReference>
<dbReference type="InterPro" id="IPR018247">
    <property type="entry name" value="EF_Hand_1_Ca_BS"/>
</dbReference>
<dbReference type="InterPro" id="IPR002048">
    <property type="entry name" value="EF_hand_dom"/>
</dbReference>
<dbReference type="InterPro" id="IPR008080">
    <property type="entry name" value="Parvalbumin"/>
</dbReference>
<dbReference type="PANTHER" id="PTHR11653:SF12">
    <property type="entry name" value="PARVALBUMIN"/>
    <property type="match status" value="1"/>
</dbReference>
<dbReference type="PANTHER" id="PTHR11653">
    <property type="entry name" value="PARVALBUMIN ALPHA"/>
    <property type="match status" value="1"/>
</dbReference>
<dbReference type="Pfam" id="PF13499">
    <property type="entry name" value="EF-hand_7"/>
    <property type="match status" value="1"/>
</dbReference>
<dbReference type="PRINTS" id="PR01697">
    <property type="entry name" value="PARVALBUMIN"/>
</dbReference>
<dbReference type="SUPFAM" id="SSF47473">
    <property type="entry name" value="EF-hand"/>
    <property type="match status" value="1"/>
</dbReference>
<dbReference type="PROSITE" id="PS00018">
    <property type="entry name" value="EF_HAND_1"/>
    <property type="match status" value="2"/>
</dbReference>
<dbReference type="PROSITE" id="PS50222">
    <property type="entry name" value="EF_HAND_2"/>
    <property type="match status" value="2"/>
</dbReference>
<name>PRVB_MERME</name>
<keyword id="KW-0007">Acetylation</keyword>
<keyword id="KW-0020">Allergen</keyword>
<keyword id="KW-0106">Calcium</keyword>
<keyword id="KW-0903">Direct protein sequencing</keyword>
<keyword id="KW-0479">Metal-binding</keyword>
<keyword id="KW-0514">Muscle protein</keyword>
<keyword id="KW-0677">Repeat</keyword>
<reference key="1">
    <citation type="journal article" date="1973" name="Eur. J. Biochem.">
        <title>The primary structure of the major parvalbumin from hake muscle. Overlapping peptides obtained with chemical and enzymatic methods. The complete amino-acid sequence.</title>
        <authorList>
            <person name="Capony J.-P."/>
            <person name="Ryden L."/>
            <person name="Demaille J.G."/>
            <person name="Pechere J.-F."/>
        </authorList>
    </citation>
    <scope>PROTEIN SEQUENCE</scope>
</reference>
<reference key="2">
    <citation type="journal article" date="2010" name="J. Proteome Res.">
        <title>Extensive de novo sequencing of new parvalbumin isoforms using a novel combination of bottom-up proteomics, accurate molecular mass measurement by FTICR-MS, and selected MS/MS ion monitoring.</title>
        <authorList>
            <person name="Carrera M."/>
            <person name="Canas B."/>
            <person name="Vazquez J."/>
            <person name="Gallardo J.M."/>
        </authorList>
    </citation>
    <scope>PROTEIN SEQUENCE</scope>
    <scope>MASS SPECTROMETRY</scope>
    <scope>ACETYLATION AT ALA-1</scope>
    <source>
        <tissue>Muscle</tissue>
    </source>
</reference>
<organism>
    <name type="scientific">Merluccius merluccius</name>
    <name type="common">European hake</name>
    <dbReference type="NCBI Taxonomy" id="8063"/>
    <lineage>
        <taxon>Eukaryota</taxon>
        <taxon>Metazoa</taxon>
        <taxon>Chordata</taxon>
        <taxon>Craniata</taxon>
        <taxon>Vertebrata</taxon>
        <taxon>Euteleostomi</taxon>
        <taxon>Actinopterygii</taxon>
        <taxon>Neopterygii</taxon>
        <taxon>Teleostei</taxon>
        <taxon>Neoteleostei</taxon>
        <taxon>Acanthomorphata</taxon>
        <taxon>Zeiogadaria</taxon>
        <taxon>Gadariae</taxon>
        <taxon>Gadiformes</taxon>
        <taxon>Gadoidei</taxon>
        <taxon>Merlucciidae</taxon>
        <taxon>Merluccius</taxon>
    </lineage>
</organism>
<protein>
    <recommendedName>
        <fullName>Parvalbumin beta</fullName>
    </recommendedName>
</protein>
<sequence>AFAGILADADITAALAACKAEGSFKHGEFFTKIGLKGKSAADIKKVFGIIDQDKSDFVEEDELKLFLQNFSAGARALTDAETATFLKAGDSDGDGKIGVEEFAAMVKG</sequence>
<evidence type="ECO:0000250" key="1">
    <source>
        <dbReference type="UniProtKB" id="P02621"/>
    </source>
</evidence>
<evidence type="ECO:0000255" key="2">
    <source>
        <dbReference type="PROSITE-ProRule" id="PRU00448"/>
    </source>
</evidence>
<evidence type="ECO:0000269" key="3">
    <source>
    </source>
</evidence>
<evidence type="ECO:0000269" key="4">
    <source>
    </source>
</evidence>
<evidence type="ECO:0000305" key="5"/>
<accession>P02620</accession>
<proteinExistence type="evidence at protein level"/>
<feature type="chain" id="PRO_0000073614" description="Parvalbumin beta">
    <location>
        <begin position="1"/>
        <end position="108"/>
    </location>
</feature>
<feature type="domain" description="EF-hand 1" evidence="2">
    <location>
        <begin position="38"/>
        <end position="73"/>
    </location>
</feature>
<feature type="domain" description="EF-hand 2" evidence="2">
    <location>
        <begin position="77"/>
        <end position="108"/>
    </location>
</feature>
<feature type="binding site" evidence="2">
    <location>
        <position position="51"/>
    </location>
    <ligand>
        <name>Ca(2+)</name>
        <dbReference type="ChEBI" id="CHEBI:29108"/>
        <label>1</label>
    </ligand>
</feature>
<feature type="binding site" evidence="2">
    <location>
        <position position="53"/>
    </location>
    <ligand>
        <name>Ca(2+)</name>
        <dbReference type="ChEBI" id="CHEBI:29108"/>
        <label>1</label>
    </ligand>
</feature>
<feature type="binding site" evidence="2">
    <location>
        <position position="55"/>
    </location>
    <ligand>
        <name>Ca(2+)</name>
        <dbReference type="ChEBI" id="CHEBI:29108"/>
        <label>1</label>
    </ligand>
</feature>
<feature type="binding site" evidence="1">
    <location>
        <position position="57"/>
    </location>
    <ligand>
        <name>Ca(2+)</name>
        <dbReference type="ChEBI" id="CHEBI:29108"/>
        <label>1</label>
    </ligand>
</feature>
<feature type="binding site" evidence="1">
    <location>
        <position position="59"/>
    </location>
    <ligand>
        <name>Ca(2+)</name>
        <dbReference type="ChEBI" id="CHEBI:29108"/>
        <label>1</label>
    </ligand>
</feature>
<feature type="binding site" evidence="2">
    <location>
        <position position="62"/>
    </location>
    <ligand>
        <name>Ca(2+)</name>
        <dbReference type="ChEBI" id="CHEBI:29108"/>
        <label>1</label>
    </ligand>
</feature>
<feature type="binding site" evidence="2">
    <location>
        <position position="90"/>
    </location>
    <ligand>
        <name>Ca(2+)</name>
        <dbReference type="ChEBI" id="CHEBI:29108"/>
        <label>2</label>
    </ligand>
</feature>
<feature type="binding site" evidence="2">
    <location>
        <position position="92"/>
    </location>
    <ligand>
        <name>Ca(2+)</name>
        <dbReference type="ChEBI" id="CHEBI:29108"/>
        <label>2</label>
    </ligand>
</feature>
<feature type="binding site" evidence="2">
    <location>
        <position position="94"/>
    </location>
    <ligand>
        <name>Ca(2+)</name>
        <dbReference type="ChEBI" id="CHEBI:29108"/>
        <label>2</label>
    </ligand>
</feature>
<feature type="binding site" evidence="2">
    <location>
        <position position="96"/>
    </location>
    <ligand>
        <name>Ca(2+)</name>
        <dbReference type="ChEBI" id="CHEBI:29108"/>
        <label>2</label>
    </ligand>
</feature>
<feature type="binding site" evidence="2">
    <location>
        <position position="101"/>
    </location>
    <ligand>
        <name>Ca(2+)</name>
        <dbReference type="ChEBI" id="CHEBI:29108"/>
        <label>2</label>
    </ligand>
</feature>
<feature type="modified residue" description="N-acetylalanine" evidence="3 4">
    <location>
        <position position="1"/>
    </location>
</feature>